<proteinExistence type="inferred from homology"/>
<evidence type="ECO:0000255" key="1"/>
<evidence type="ECO:0000305" key="2"/>
<gene>
    <name type="ORF">IIV6-075L</name>
</gene>
<feature type="chain" id="PRO_0000377979" description="Uncharacterized protein 075L">
    <location>
        <begin position="1"/>
        <end position="258"/>
    </location>
</feature>
<feature type="binding site" evidence="1">
    <location>
        <begin position="36"/>
        <end position="43"/>
    </location>
    <ligand>
        <name>ATP</name>
        <dbReference type="ChEBI" id="CHEBI:30616"/>
    </ligand>
</feature>
<accession>O55711</accession>
<organismHost>
    <name type="scientific">Acheta domesticus</name>
    <name type="common">House cricket</name>
    <dbReference type="NCBI Taxonomy" id="6997"/>
</organismHost>
<organismHost>
    <name type="scientific">Chilo suppressalis</name>
    <name type="common">Asiatic rice borer moth</name>
    <dbReference type="NCBI Taxonomy" id="168631"/>
</organismHost>
<organismHost>
    <name type="scientific">Gryllus bimaculatus</name>
    <name type="common">Two-spotted cricket</name>
    <dbReference type="NCBI Taxonomy" id="6999"/>
</organismHost>
<organismHost>
    <name type="scientific">Gryllus campestris</name>
    <dbReference type="NCBI Taxonomy" id="58607"/>
</organismHost>
<organismHost>
    <name type="scientific">Spodoptera frugiperda</name>
    <name type="common">Fall armyworm</name>
    <dbReference type="NCBI Taxonomy" id="7108"/>
</organismHost>
<keyword id="KW-0067">ATP-binding</keyword>
<keyword id="KW-0547">Nucleotide-binding</keyword>
<keyword id="KW-1185">Reference proteome</keyword>
<dbReference type="EMBL" id="AF303741">
    <property type="protein sequence ID" value="AAB94422.1"/>
    <property type="molecule type" value="Genomic_DNA"/>
</dbReference>
<dbReference type="PIR" id="T03048">
    <property type="entry name" value="T03048"/>
</dbReference>
<dbReference type="RefSeq" id="NP_149538.1">
    <property type="nucleotide sequence ID" value="NC_003038.1"/>
</dbReference>
<dbReference type="KEGG" id="vg:1733187"/>
<dbReference type="OrthoDB" id="9258at10239"/>
<dbReference type="Proteomes" id="UP000001359">
    <property type="component" value="Genome"/>
</dbReference>
<dbReference type="GO" id="GO:0005524">
    <property type="term" value="F:ATP binding"/>
    <property type="evidence" value="ECO:0007669"/>
    <property type="project" value="UniProtKB-KW"/>
</dbReference>
<dbReference type="Gene3D" id="3.40.50.300">
    <property type="entry name" value="P-loop containing nucleotide triphosphate hydrolases"/>
    <property type="match status" value="1"/>
</dbReference>
<dbReference type="InterPro" id="IPR027417">
    <property type="entry name" value="P-loop_NTPase"/>
</dbReference>
<dbReference type="SUPFAM" id="SSF52540">
    <property type="entry name" value="P-loop containing nucleoside triphosphate hydrolases"/>
    <property type="match status" value="1"/>
</dbReference>
<protein>
    <recommendedName>
        <fullName>Uncharacterized protein 075L</fullName>
    </recommendedName>
</protein>
<name>VF075_IIV6</name>
<reference key="1">
    <citation type="journal article" date="2001" name="Virology">
        <title>Analysis of the first complete DNA sequence of an invertebrate iridovirus: coding strategy of the genome of Chilo iridescent virus.</title>
        <authorList>
            <person name="Jakob N.J."/>
            <person name="Mueller K."/>
            <person name="Bahr U."/>
            <person name="Darai G."/>
        </authorList>
    </citation>
    <scope>NUCLEOTIDE SEQUENCE [LARGE SCALE GENOMIC DNA]</scope>
</reference>
<reference key="2">
    <citation type="journal article" date="2007" name="Virol. J.">
        <title>Comparative genomic analysis of the family Iridoviridae: re-annotating and defining the core set of iridovirus genes.</title>
        <authorList>
            <person name="Eaton H.E."/>
            <person name="Metcalf J."/>
            <person name="Penny E."/>
            <person name="Tcherepanov V."/>
            <person name="Upton C."/>
            <person name="Brunetti C.R."/>
        </authorList>
    </citation>
    <scope>GENOME REANNOTATION</scope>
</reference>
<organism>
    <name type="scientific">Invertebrate iridescent virus 6</name>
    <name type="common">IIV-6</name>
    <name type="synonym">Chilo iridescent virus</name>
    <dbReference type="NCBI Taxonomy" id="176652"/>
    <lineage>
        <taxon>Viruses</taxon>
        <taxon>Varidnaviria</taxon>
        <taxon>Bamfordvirae</taxon>
        <taxon>Nucleocytoviricota</taxon>
        <taxon>Megaviricetes</taxon>
        <taxon>Pimascovirales</taxon>
        <taxon>Iridoviridae</taxon>
        <taxon>Betairidovirinae</taxon>
        <taxon>Iridovirus</taxon>
    </lineage>
</organism>
<comment type="similarity">
    <text evidence="2">Belongs to the IIV-6 075L family.</text>
</comment>
<sequence length="258" mass="30219">MSDTQEYSIKPFDANLINPREDNFNTVGGSKIVVIGKAGTGKSTLIRYLLFLKRSIIPVGMVVSGTEDSNCFYSDIFPPLFIHDEYDEEIIKKFIKRQKYANEHISENPWAVLLLDDCTEDKKIFSSKWQQSLFKNGRHWKLLYILSLQHATDIPPAIRTNVDGVFIFRETNENNLKNIYLNYAGVIPKFEIFKAYMTQVTGDYTALYIDNSAQDNGEWYEHVYYWKVPQMDTRDMKFGCHEYIEFGKQRYNEKYSKN</sequence>